<reference key="1">
    <citation type="journal article" date="2000" name="Nature">
        <title>Sequence and analysis of chromosome 5 of the plant Arabidopsis thaliana.</title>
        <authorList>
            <person name="Tabata S."/>
            <person name="Kaneko T."/>
            <person name="Nakamura Y."/>
            <person name="Kotani H."/>
            <person name="Kato T."/>
            <person name="Asamizu E."/>
            <person name="Miyajima N."/>
            <person name="Sasamoto S."/>
            <person name="Kimura T."/>
            <person name="Hosouchi T."/>
            <person name="Kawashima K."/>
            <person name="Kohara M."/>
            <person name="Matsumoto M."/>
            <person name="Matsuno A."/>
            <person name="Muraki A."/>
            <person name="Nakayama S."/>
            <person name="Nakazaki N."/>
            <person name="Naruo K."/>
            <person name="Okumura S."/>
            <person name="Shinpo S."/>
            <person name="Takeuchi C."/>
            <person name="Wada T."/>
            <person name="Watanabe A."/>
            <person name="Yamada M."/>
            <person name="Yasuda M."/>
            <person name="Sato S."/>
            <person name="de la Bastide M."/>
            <person name="Huang E."/>
            <person name="Spiegel L."/>
            <person name="Gnoj L."/>
            <person name="O'Shaughnessy A."/>
            <person name="Preston R."/>
            <person name="Habermann K."/>
            <person name="Murray J."/>
            <person name="Johnson D."/>
            <person name="Rohlfing T."/>
            <person name="Nelson J."/>
            <person name="Stoneking T."/>
            <person name="Pepin K."/>
            <person name="Spieth J."/>
            <person name="Sekhon M."/>
            <person name="Armstrong J."/>
            <person name="Becker M."/>
            <person name="Belter E."/>
            <person name="Cordum H."/>
            <person name="Cordes M."/>
            <person name="Courtney L."/>
            <person name="Courtney W."/>
            <person name="Dante M."/>
            <person name="Du H."/>
            <person name="Edwards J."/>
            <person name="Fryman J."/>
            <person name="Haakensen B."/>
            <person name="Lamar E."/>
            <person name="Latreille P."/>
            <person name="Leonard S."/>
            <person name="Meyer R."/>
            <person name="Mulvaney E."/>
            <person name="Ozersky P."/>
            <person name="Riley A."/>
            <person name="Strowmatt C."/>
            <person name="Wagner-McPherson C."/>
            <person name="Wollam A."/>
            <person name="Yoakum M."/>
            <person name="Bell M."/>
            <person name="Dedhia N."/>
            <person name="Parnell L."/>
            <person name="Shah R."/>
            <person name="Rodriguez M."/>
            <person name="Hoon See L."/>
            <person name="Vil D."/>
            <person name="Baker J."/>
            <person name="Kirchoff K."/>
            <person name="Toth K."/>
            <person name="King L."/>
            <person name="Bahret A."/>
            <person name="Miller B."/>
            <person name="Marra M.A."/>
            <person name="Martienssen R."/>
            <person name="McCombie W.R."/>
            <person name="Wilson R.K."/>
            <person name="Murphy G."/>
            <person name="Bancroft I."/>
            <person name="Volckaert G."/>
            <person name="Wambutt R."/>
            <person name="Duesterhoeft A."/>
            <person name="Stiekema W."/>
            <person name="Pohl T."/>
            <person name="Entian K.-D."/>
            <person name="Terryn N."/>
            <person name="Hartley N."/>
            <person name="Bent E."/>
            <person name="Johnson S."/>
            <person name="Langham S.-A."/>
            <person name="McCullagh B."/>
            <person name="Robben J."/>
            <person name="Grymonprez B."/>
            <person name="Zimmermann W."/>
            <person name="Ramsperger U."/>
            <person name="Wedler H."/>
            <person name="Balke K."/>
            <person name="Wedler E."/>
            <person name="Peters S."/>
            <person name="van Staveren M."/>
            <person name="Dirkse W."/>
            <person name="Mooijman P."/>
            <person name="Klein Lankhorst R."/>
            <person name="Weitzenegger T."/>
            <person name="Bothe G."/>
            <person name="Rose M."/>
            <person name="Hauf J."/>
            <person name="Berneiser S."/>
            <person name="Hempel S."/>
            <person name="Feldpausch M."/>
            <person name="Lamberth S."/>
            <person name="Villarroel R."/>
            <person name="Gielen J."/>
            <person name="Ardiles W."/>
            <person name="Bents O."/>
            <person name="Lemcke K."/>
            <person name="Kolesov G."/>
            <person name="Mayer K.F.X."/>
            <person name="Rudd S."/>
            <person name="Schoof H."/>
            <person name="Schueller C."/>
            <person name="Zaccaria P."/>
            <person name="Mewes H.-W."/>
            <person name="Bevan M."/>
            <person name="Fransz P.F."/>
        </authorList>
    </citation>
    <scope>NUCLEOTIDE SEQUENCE [LARGE SCALE GENOMIC DNA]</scope>
    <source>
        <strain>cv. Columbia</strain>
    </source>
</reference>
<reference key="2">
    <citation type="journal article" date="2017" name="Plant J.">
        <title>Araport11: a complete reannotation of the Arabidopsis thaliana reference genome.</title>
        <authorList>
            <person name="Cheng C.Y."/>
            <person name="Krishnakumar V."/>
            <person name="Chan A.P."/>
            <person name="Thibaud-Nissen F."/>
            <person name="Schobel S."/>
            <person name="Town C.D."/>
        </authorList>
    </citation>
    <scope>GENOME REANNOTATION</scope>
    <source>
        <strain>cv. Columbia</strain>
    </source>
</reference>
<reference key="3">
    <citation type="journal article" date="2006" name="Plant Biotechnol. J.">
        <title>Simultaneous high-throughput recombinational cloning of open reading frames in closed and open configurations.</title>
        <authorList>
            <person name="Underwood B.A."/>
            <person name="Vanderhaeghen R."/>
            <person name="Whitford R."/>
            <person name="Town C.D."/>
            <person name="Hilson P."/>
        </authorList>
    </citation>
    <scope>NUCLEOTIDE SEQUENCE [LARGE SCALE MRNA]</scope>
    <source>
        <strain>cv. Columbia</strain>
    </source>
</reference>
<reference key="4">
    <citation type="journal article" date="2003" name="New Phytol.">
        <title>Calmodulins and related potential calcium sensors of Arabidopsis.</title>
        <authorList>
            <person name="McCormack E."/>
            <person name="Braam J."/>
        </authorList>
    </citation>
    <scope>GENE FAMILY</scope>
    <scope>NOMENCLATURE</scope>
</reference>
<gene>
    <name type="primary">CML29</name>
    <name type="ordered locus">At5g17480</name>
    <name type="ORF">K3M16.50</name>
</gene>
<dbReference type="EMBL" id="AL391150">
    <property type="protein sequence ID" value="CAC01892.1"/>
    <property type="molecule type" value="Genomic_DNA"/>
</dbReference>
<dbReference type="EMBL" id="CP002688">
    <property type="protein sequence ID" value="AED92432.1"/>
    <property type="molecule type" value="Genomic_DNA"/>
</dbReference>
<dbReference type="EMBL" id="DQ446958">
    <property type="protein sequence ID" value="ABE66163.1"/>
    <property type="molecule type" value="mRNA"/>
</dbReference>
<dbReference type="EMBL" id="DQ653290">
    <property type="protein sequence ID" value="ABK28700.1"/>
    <property type="status" value="ALT_SEQ"/>
    <property type="molecule type" value="mRNA"/>
</dbReference>
<dbReference type="PIR" id="T51474">
    <property type="entry name" value="T51474"/>
</dbReference>
<dbReference type="RefSeq" id="NP_001318585.1">
    <property type="nucleotide sequence ID" value="NM_001343504.1"/>
</dbReference>
<dbReference type="SMR" id="Q9LF54"/>
<dbReference type="FunCoup" id="Q9LF54">
    <property type="interactions" value="210"/>
</dbReference>
<dbReference type="STRING" id="3702.Q9LF54"/>
<dbReference type="PaxDb" id="3702-AT5G17480.1"/>
<dbReference type="ProteomicsDB" id="240898"/>
<dbReference type="EnsemblPlants" id="AT5G17480.1">
    <property type="protein sequence ID" value="AT5G17480.1"/>
    <property type="gene ID" value="AT5G17480"/>
</dbReference>
<dbReference type="GeneID" id="28721170"/>
<dbReference type="Gramene" id="AT5G17480.1">
    <property type="protein sequence ID" value="AT5G17480.1"/>
    <property type="gene ID" value="AT5G17480"/>
</dbReference>
<dbReference type="KEGG" id="ath:AT5G17480"/>
<dbReference type="Araport" id="AT5G17480"/>
<dbReference type="TAIR" id="AT5G17480">
    <property type="gene designation" value="PC1"/>
</dbReference>
<dbReference type="eggNOG" id="KOG0027">
    <property type="taxonomic scope" value="Eukaryota"/>
</dbReference>
<dbReference type="HOGENOM" id="CLU_061288_22_5_1"/>
<dbReference type="InParanoid" id="Q9LF54"/>
<dbReference type="OMA" id="FCHANPG"/>
<dbReference type="OrthoDB" id="26525at2759"/>
<dbReference type="PhylomeDB" id="Q9LF54"/>
<dbReference type="PRO" id="PR:Q9LF54"/>
<dbReference type="Proteomes" id="UP000006548">
    <property type="component" value="Chromosome 5"/>
</dbReference>
<dbReference type="ExpressionAtlas" id="Q9LF54">
    <property type="expression patterns" value="baseline and differential"/>
</dbReference>
<dbReference type="GO" id="GO:0005737">
    <property type="term" value="C:cytoplasm"/>
    <property type="evidence" value="ECO:0000314"/>
    <property type="project" value="TAIR"/>
</dbReference>
<dbReference type="GO" id="GO:0005509">
    <property type="term" value="F:calcium ion binding"/>
    <property type="evidence" value="ECO:0007669"/>
    <property type="project" value="InterPro"/>
</dbReference>
<dbReference type="CDD" id="cd00051">
    <property type="entry name" value="EFh"/>
    <property type="match status" value="1"/>
</dbReference>
<dbReference type="FunFam" id="1.10.238.10:FF:000198">
    <property type="entry name" value="Polcalcin Phl p 7"/>
    <property type="match status" value="1"/>
</dbReference>
<dbReference type="Gene3D" id="1.10.238.10">
    <property type="entry name" value="EF-hand"/>
    <property type="match status" value="1"/>
</dbReference>
<dbReference type="InterPro" id="IPR011992">
    <property type="entry name" value="EF-hand-dom_pair"/>
</dbReference>
<dbReference type="InterPro" id="IPR018247">
    <property type="entry name" value="EF_Hand_1_Ca_BS"/>
</dbReference>
<dbReference type="InterPro" id="IPR002048">
    <property type="entry name" value="EF_hand_dom"/>
</dbReference>
<dbReference type="InterPro" id="IPR039647">
    <property type="entry name" value="EF_hand_pair_protein_CML-like"/>
</dbReference>
<dbReference type="PANTHER" id="PTHR10891">
    <property type="entry name" value="EF-HAND CALCIUM-BINDING DOMAIN CONTAINING PROTEIN"/>
    <property type="match status" value="1"/>
</dbReference>
<dbReference type="Pfam" id="PF13499">
    <property type="entry name" value="EF-hand_7"/>
    <property type="match status" value="1"/>
</dbReference>
<dbReference type="SMART" id="SM00054">
    <property type="entry name" value="EFh"/>
    <property type="match status" value="2"/>
</dbReference>
<dbReference type="SUPFAM" id="SSF47473">
    <property type="entry name" value="EF-hand"/>
    <property type="match status" value="1"/>
</dbReference>
<dbReference type="PROSITE" id="PS00018">
    <property type="entry name" value="EF_HAND_1"/>
    <property type="match status" value="2"/>
</dbReference>
<dbReference type="PROSITE" id="PS50222">
    <property type="entry name" value="EF_HAND_2"/>
    <property type="match status" value="2"/>
</dbReference>
<protein>
    <recommendedName>
        <fullName>Probable calcium-binding protein CML29</fullName>
    </recommendedName>
    <alternativeName>
        <fullName>Calmodulin-like protein 29</fullName>
    </alternativeName>
</protein>
<accession>Q9LF54</accession>
<accession>A0MFG4</accession>
<accession>Q1PDW0</accession>
<sequence length="83" mass="9048">MADATEKAEHDRIFKKFDANGDGKISAAELEEALKTLGSVTADDVKRMMAEIDTDGDGNISYQEFTDFAGANRGLMKDVAKIF</sequence>
<keyword id="KW-0106">Calcium</keyword>
<keyword id="KW-0479">Metal-binding</keyword>
<keyword id="KW-1185">Reference proteome</keyword>
<keyword id="KW-0677">Repeat</keyword>
<proteinExistence type="inferred from homology"/>
<comment type="function">
    <text evidence="1">Potential calcium sensor.</text>
</comment>
<comment type="caution">
    <text evidence="3">Although assigned as a calmodulin family member by Ref.4, it only contains EF-hand domains.</text>
</comment>
<comment type="sequence caution" evidence="3">
    <conflict type="erroneous termination">
        <sequence resource="EMBL-CDS" id="ABK28700"/>
    </conflict>
    <text>Extended C-terminus.</text>
</comment>
<feature type="chain" id="PRO_0000073665" description="Probable calcium-binding protein CML29">
    <location>
        <begin position="1"/>
        <end position="83"/>
    </location>
</feature>
<feature type="domain" description="EF-hand 1" evidence="2">
    <location>
        <begin position="5"/>
        <end position="40"/>
    </location>
</feature>
<feature type="domain" description="EF-hand 2" evidence="2">
    <location>
        <begin position="43"/>
        <end position="75"/>
    </location>
</feature>
<feature type="binding site" evidence="2">
    <location>
        <position position="18"/>
    </location>
    <ligand>
        <name>Ca(2+)</name>
        <dbReference type="ChEBI" id="CHEBI:29108"/>
        <label>1</label>
    </ligand>
</feature>
<feature type="binding site" evidence="2">
    <location>
        <position position="20"/>
    </location>
    <ligand>
        <name>Ca(2+)</name>
        <dbReference type="ChEBI" id="CHEBI:29108"/>
        <label>1</label>
    </ligand>
</feature>
<feature type="binding site" evidence="2">
    <location>
        <position position="22"/>
    </location>
    <ligand>
        <name>Ca(2+)</name>
        <dbReference type="ChEBI" id="CHEBI:29108"/>
        <label>1</label>
    </ligand>
</feature>
<feature type="binding site" evidence="2">
    <location>
        <position position="24"/>
    </location>
    <ligand>
        <name>Ca(2+)</name>
        <dbReference type="ChEBI" id="CHEBI:29108"/>
        <label>1</label>
    </ligand>
</feature>
<feature type="binding site" evidence="2">
    <location>
        <position position="29"/>
    </location>
    <ligand>
        <name>Ca(2+)</name>
        <dbReference type="ChEBI" id="CHEBI:29108"/>
        <label>1</label>
    </ligand>
</feature>
<feature type="binding site" evidence="2">
    <location>
        <position position="53"/>
    </location>
    <ligand>
        <name>Ca(2+)</name>
        <dbReference type="ChEBI" id="CHEBI:29108"/>
        <label>2</label>
    </ligand>
</feature>
<feature type="binding site" evidence="2">
    <location>
        <position position="55"/>
    </location>
    <ligand>
        <name>Ca(2+)</name>
        <dbReference type="ChEBI" id="CHEBI:29108"/>
        <label>2</label>
    </ligand>
</feature>
<feature type="binding site" evidence="2">
    <location>
        <position position="57"/>
    </location>
    <ligand>
        <name>Ca(2+)</name>
        <dbReference type="ChEBI" id="CHEBI:29108"/>
        <label>2</label>
    </ligand>
</feature>
<feature type="binding site" evidence="2">
    <location>
        <position position="59"/>
    </location>
    <ligand>
        <name>Ca(2+)</name>
        <dbReference type="ChEBI" id="CHEBI:29108"/>
        <label>2</label>
    </ligand>
</feature>
<feature type="binding site" evidence="2">
    <location>
        <position position="64"/>
    </location>
    <ligand>
        <name>Ca(2+)</name>
        <dbReference type="ChEBI" id="CHEBI:29108"/>
        <label>2</label>
    </ligand>
</feature>
<name>CML29_ARATH</name>
<evidence type="ECO:0000250" key="1"/>
<evidence type="ECO:0000255" key="2">
    <source>
        <dbReference type="PROSITE-ProRule" id="PRU00448"/>
    </source>
</evidence>
<evidence type="ECO:0000305" key="3"/>
<organism>
    <name type="scientific">Arabidopsis thaliana</name>
    <name type="common">Mouse-ear cress</name>
    <dbReference type="NCBI Taxonomy" id="3702"/>
    <lineage>
        <taxon>Eukaryota</taxon>
        <taxon>Viridiplantae</taxon>
        <taxon>Streptophyta</taxon>
        <taxon>Embryophyta</taxon>
        <taxon>Tracheophyta</taxon>
        <taxon>Spermatophyta</taxon>
        <taxon>Magnoliopsida</taxon>
        <taxon>eudicotyledons</taxon>
        <taxon>Gunneridae</taxon>
        <taxon>Pentapetalae</taxon>
        <taxon>rosids</taxon>
        <taxon>malvids</taxon>
        <taxon>Brassicales</taxon>
        <taxon>Brassicaceae</taxon>
        <taxon>Camelineae</taxon>
        <taxon>Arabidopsis</taxon>
    </lineage>
</organism>